<keyword id="KW-0227">DNA damage</keyword>
<keyword id="KW-0234">DNA repair</keyword>
<keyword id="KW-0235">DNA replication</keyword>
<keyword id="KW-0436">Ligase</keyword>
<keyword id="KW-0460">Magnesium</keyword>
<keyword id="KW-0464">Manganese</keyword>
<keyword id="KW-0479">Metal-binding</keyword>
<keyword id="KW-0520">NAD</keyword>
<keyword id="KW-0862">Zinc</keyword>
<reference key="1">
    <citation type="journal article" date="2009" name="Environ. Microbiol.">
        <title>Contribution of mobile genetic elements to Desulfovibrio vulgaris genome plasticity.</title>
        <authorList>
            <person name="Walker C.B."/>
            <person name="Stolyar S."/>
            <person name="Chivian D."/>
            <person name="Pinel N."/>
            <person name="Gabster J.A."/>
            <person name="Dehal P.S."/>
            <person name="He Z."/>
            <person name="Yang Z.K."/>
            <person name="Yen H.C."/>
            <person name="Zhou J."/>
            <person name="Wall J.D."/>
            <person name="Hazen T.C."/>
            <person name="Arkin A.P."/>
            <person name="Stahl D.A."/>
        </authorList>
    </citation>
    <scope>NUCLEOTIDE SEQUENCE [LARGE SCALE GENOMIC DNA]</scope>
    <source>
        <strain>DP4</strain>
    </source>
</reference>
<protein>
    <recommendedName>
        <fullName evidence="1">DNA ligase 1</fullName>
        <ecNumber evidence="1">6.5.1.2</ecNumber>
    </recommendedName>
    <alternativeName>
        <fullName evidence="1">Polydeoxyribonucleotide synthase [NAD(+)] 1</fullName>
    </alternativeName>
</protein>
<feature type="chain" id="PRO_0000313220" description="DNA ligase 1">
    <location>
        <begin position="1"/>
        <end position="680"/>
    </location>
</feature>
<feature type="domain" description="BRCT" evidence="1">
    <location>
        <begin position="599"/>
        <end position="680"/>
    </location>
</feature>
<feature type="active site" description="N6-AMP-lysine intermediate" evidence="1">
    <location>
        <position position="117"/>
    </location>
</feature>
<feature type="binding site" evidence="1">
    <location>
        <begin position="35"/>
        <end position="39"/>
    </location>
    <ligand>
        <name>NAD(+)</name>
        <dbReference type="ChEBI" id="CHEBI:57540"/>
    </ligand>
</feature>
<feature type="binding site" evidence="1">
    <location>
        <begin position="84"/>
        <end position="85"/>
    </location>
    <ligand>
        <name>NAD(+)</name>
        <dbReference type="ChEBI" id="CHEBI:57540"/>
    </ligand>
</feature>
<feature type="binding site" evidence="1">
    <location>
        <position position="115"/>
    </location>
    <ligand>
        <name>NAD(+)</name>
        <dbReference type="ChEBI" id="CHEBI:57540"/>
    </ligand>
</feature>
<feature type="binding site" evidence="1">
    <location>
        <position position="138"/>
    </location>
    <ligand>
        <name>NAD(+)</name>
        <dbReference type="ChEBI" id="CHEBI:57540"/>
    </ligand>
</feature>
<feature type="binding site" evidence="1">
    <location>
        <position position="175"/>
    </location>
    <ligand>
        <name>NAD(+)</name>
        <dbReference type="ChEBI" id="CHEBI:57540"/>
    </ligand>
</feature>
<feature type="binding site" evidence="1">
    <location>
        <position position="295"/>
    </location>
    <ligand>
        <name>NAD(+)</name>
        <dbReference type="ChEBI" id="CHEBI:57540"/>
    </ligand>
</feature>
<feature type="binding site" evidence="1">
    <location>
        <position position="319"/>
    </location>
    <ligand>
        <name>NAD(+)</name>
        <dbReference type="ChEBI" id="CHEBI:57540"/>
    </ligand>
</feature>
<feature type="binding site" evidence="1">
    <location>
        <position position="413"/>
    </location>
    <ligand>
        <name>Zn(2+)</name>
        <dbReference type="ChEBI" id="CHEBI:29105"/>
    </ligand>
</feature>
<feature type="binding site" evidence="1">
    <location>
        <position position="416"/>
    </location>
    <ligand>
        <name>Zn(2+)</name>
        <dbReference type="ChEBI" id="CHEBI:29105"/>
    </ligand>
</feature>
<feature type="binding site" evidence="1">
    <location>
        <position position="431"/>
    </location>
    <ligand>
        <name>Zn(2+)</name>
        <dbReference type="ChEBI" id="CHEBI:29105"/>
    </ligand>
</feature>
<feature type="binding site" evidence="1">
    <location>
        <position position="436"/>
    </location>
    <ligand>
        <name>Zn(2+)</name>
        <dbReference type="ChEBI" id="CHEBI:29105"/>
    </ligand>
</feature>
<sequence>MCNIPQHQSRAAWLRAELARHNRLYYELDTPEISDAEYDTLYRELVNLETLWPALMDEASPTQRVGGEVLDRLEKQAHTMRMYSLDNAFSRDEWGAFIQRMYNTLPETPSSFWCDPKMDGLALEVIYENGVFTSALTRGNGAEGEVVTAAMRTVRNLPLRLRGNNVPHRLEVRGEVVIAKADFEQLNARQSAVGGKVFANPRNAAAGSVRQLDTSITAGRPLQFLAYGVGQVVLDGGTAPWTTHSDLMARLREWGFDSPPEGRLCTSPDEVWAYYEMLGARRESLAIEIDGVVAKVDDTEAQEALGFTARAPRWALALKFPAMQVRTRLQDIRVQVGRTGVLTPVAILEPVRVGGVEVSRATLHNAYEIEDKGLMLGDMVLVQRAGDVIPEVVRPLVEDRTGGERPFVFPTTCPECGSVVHKPNDEVAHRCINVSCPAVRRQSIIHFVSKAGLDVRGFGEHIVQQLVDAGRVTTAADLFSLTTVDLMGFERMGPTSAANAIASLDAARTGATLARLICALGIRHVGEQTARTLATHFVDLDAMRKADGEKLLHLPDIGPEVAASIRCFFDNQSNIELLEQLRDKGLWPRKPDANGPFVREGSQLQGLKLLFTGSLQRMSRSEAKRMAEAAGAHVVSNVSKSLDMIVAGADAGSKLDQAKSLGLHVIDEDAFANLLKGLDR</sequence>
<organism>
    <name type="scientific">Nitratidesulfovibrio vulgaris (strain DP4)</name>
    <name type="common">Desulfovibrio vulgaris</name>
    <dbReference type="NCBI Taxonomy" id="391774"/>
    <lineage>
        <taxon>Bacteria</taxon>
        <taxon>Pseudomonadati</taxon>
        <taxon>Thermodesulfobacteriota</taxon>
        <taxon>Desulfovibrionia</taxon>
        <taxon>Desulfovibrionales</taxon>
        <taxon>Desulfovibrionaceae</taxon>
        <taxon>Nitratidesulfovibrio</taxon>
    </lineage>
</organism>
<evidence type="ECO:0000255" key="1">
    <source>
        <dbReference type="HAMAP-Rule" id="MF_01588"/>
    </source>
</evidence>
<name>DNLJ1_NITV4</name>
<comment type="function">
    <text evidence="1">DNA ligase that catalyzes the formation of phosphodiester linkages between 5'-phosphoryl and 3'-hydroxyl groups in double-stranded DNA using NAD as a coenzyme and as the energy source for the reaction. It is essential for DNA replication and repair of damaged DNA.</text>
</comment>
<comment type="catalytic activity">
    <reaction evidence="1">
        <text>NAD(+) + (deoxyribonucleotide)n-3'-hydroxyl + 5'-phospho-(deoxyribonucleotide)m = (deoxyribonucleotide)n+m + AMP + beta-nicotinamide D-nucleotide.</text>
        <dbReference type="EC" id="6.5.1.2"/>
    </reaction>
</comment>
<comment type="cofactor">
    <cofactor evidence="1">
        <name>Mg(2+)</name>
        <dbReference type="ChEBI" id="CHEBI:18420"/>
    </cofactor>
    <cofactor evidence="1">
        <name>Mn(2+)</name>
        <dbReference type="ChEBI" id="CHEBI:29035"/>
    </cofactor>
</comment>
<comment type="similarity">
    <text evidence="1">Belongs to the NAD-dependent DNA ligase family. LigA subfamily.</text>
</comment>
<dbReference type="EC" id="6.5.1.2" evidence="1"/>
<dbReference type="EMBL" id="CP000527">
    <property type="protein sequence ID" value="ABM28065.1"/>
    <property type="molecule type" value="Genomic_DNA"/>
</dbReference>
<dbReference type="RefSeq" id="WP_011792008.1">
    <property type="nucleotide sequence ID" value="NC_008751.1"/>
</dbReference>
<dbReference type="SMR" id="A1VC99"/>
<dbReference type="KEGG" id="dvl:Dvul_1045"/>
<dbReference type="HOGENOM" id="CLU_007764_2_1_7"/>
<dbReference type="Proteomes" id="UP000009173">
    <property type="component" value="Chromosome"/>
</dbReference>
<dbReference type="GO" id="GO:0005829">
    <property type="term" value="C:cytosol"/>
    <property type="evidence" value="ECO:0007669"/>
    <property type="project" value="TreeGrafter"/>
</dbReference>
<dbReference type="GO" id="GO:0003677">
    <property type="term" value="F:DNA binding"/>
    <property type="evidence" value="ECO:0007669"/>
    <property type="project" value="InterPro"/>
</dbReference>
<dbReference type="GO" id="GO:0003911">
    <property type="term" value="F:DNA ligase (NAD+) activity"/>
    <property type="evidence" value="ECO:0007669"/>
    <property type="project" value="UniProtKB-UniRule"/>
</dbReference>
<dbReference type="GO" id="GO:0046872">
    <property type="term" value="F:metal ion binding"/>
    <property type="evidence" value="ECO:0007669"/>
    <property type="project" value="UniProtKB-KW"/>
</dbReference>
<dbReference type="GO" id="GO:0006281">
    <property type="term" value="P:DNA repair"/>
    <property type="evidence" value="ECO:0007669"/>
    <property type="project" value="UniProtKB-KW"/>
</dbReference>
<dbReference type="GO" id="GO:0006260">
    <property type="term" value="P:DNA replication"/>
    <property type="evidence" value="ECO:0007669"/>
    <property type="project" value="UniProtKB-KW"/>
</dbReference>
<dbReference type="CDD" id="cd17748">
    <property type="entry name" value="BRCT_DNA_ligase_like"/>
    <property type="match status" value="1"/>
</dbReference>
<dbReference type="CDD" id="cd00114">
    <property type="entry name" value="LIGANc"/>
    <property type="match status" value="1"/>
</dbReference>
<dbReference type="FunFam" id="1.10.150.20:FF:000006">
    <property type="entry name" value="DNA ligase"/>
    <property type="match status" value="1"/>
</dbReference>
<dbReference type="FunFam" id="2.40.50.140:FF:000012">
    <property type="entry name" value="DNA ligase"/>
    <property type="match status" value="1"/>
</dbReference>
<dbReference type="Gene3D" id="6.20.10.30">
    <property type="match status" value="1"/>
</dbReference>
<dbReference type="Gene3D" id="1.10.150.20">
    <property type="entry name" value="5' to 3' exonuclease, C-terminal subdomain"/>
    <property type="match status" value="2"/>
</dbReference>
<dbReference type="Gene3D" id="3.40.50.10190">
    <property type="entry name" value="BRCT domain"/>
    <property type="match status" value="1"/>
</dbReference>
<dbReference type="Gene3D" id="3.30.470.30">
    <property type="entry name" value="DNA ligase/mRNA capping enzyme"/>
    <property type="match status" value="1"/>
</dbReference>
<dbReference type="Gene3D" id="1.10.287.610">
    <property type="entry name" value="Helix hairpin bin"/>
    <property type="match status" value="1"/>
</dbReference>
<dbReference type="Gene3D" id="2.40.50.140">
    <property type="entry name" value="Nucleic acid-binding proteins"/>
    <property type="match status" value="1"/>
</dbReference>
<dbReference type="HAMAP" id="MF_01588">
    <property type="entry name" value="DNA_ligase_A"/>
    <property type="match status" value="1"/>
</dbReference>
<dbReference type="InterPro" id="IPR001357">
    <property type="entry name" value="BRCT_dom"/>
</dbReference>
<dbReference type="InterPro" id="IPR036420">
    <property type="entry name" value="BRCT_dom_sf"/>
</dbReference>
<dbReference type="InterPro" id="IPR041663">
    <property type="entry name" value="DisA/LigA_HHH"/>
</dbReference>
<dbReference type="InterPro" id="IPR001679">
    <property type="entry name" value="DNA_ligase"/>
</dbReference>
<dbReference type="InterPro" id="IPR033136">
    <property type="entry name" value="DNA_ligase_CS"/>
</dbReference>
<dbReference type="InterPro" id="IPR013839">
    <property type="entry name" value="DNAligase_adenylation"/>
</dbReference>
<dbReference type="InterPro" id="IPR013840">
    <property type="entry name" value="DNAligase_N"/>
</dbReference>
<dbReference type="InterPro" id="IPR003583">
    <property type="entry name" value="Hlx-hairpin-Hlx_DNA-bd_motif"/>
</dbReference>
<dbReference type="InterPro" id="IPR012340">
    <property type="entry name" value="NA-bd_OB-fold"/>
</dbReference>
<dbReference type="InterPro" id="IPR004150">
    <property type="entry name" value="NAD_DNA_ligase_OB"/>
</dbReference>
<dbReference type="InterPro" id="IPR010994">
    <property type="entry name" value="RuvA_2-like"/>
</dbReference>
<dbReference type="InterPro" id="IPR004149">
    <property type="entry name" value="Znf_DNAligase_C4"/>
</dbReference>
<dbReference type="NCBIfam" id="TIGR00575">
    <property type="entry name" value="dnlj"/>
    <property type="match status" value="1"/>
</dbReference>
<dbReference type="NCBIfam" id="NF005932">
    <property type="entry name" value="PRK07956.1"/>
    <property type="match status" value="1"/>
</dbReference>
<dbReference type="PANTHER" id="PTHR23389">
    <property type="entry name" value="CHROMOSOME TRANSMISSION FIDELITY FACTOR 18"/>
    <property type="match status" value="1"/>
</dbReference>
<dbReference type="PANTHER" id="PTHR23389:SF9">
    <property type="entry name" value="DNA LIGASE"/>
    <property type="match status" value="1"/>
</dbReference>
<dbReference type="Pfam" id="PF00533">
    <property type="entry name" value="BRCT"/>
    <property type="match status" value="1"/>
</dbReference>
<dbReference type="Pfam" id="PF01653">
    <property type="entry name" value="DNA_ligase_aden"/>
    <property type="match status" value="1"/>
</dbReference>
<dbReference type="Pfam" id="PF03120">
    <property type="entry name" value="DNA_ligase_OB"/>
    <property type="match status" value="1"/>
</dbReference>
<dbReference type="Pfam" id="PF03119">
    <property type="entry name" value="DNA_ligase_ZBD"/>
    <property type="match status" value="1"/>
</dbReference>
<dbReference type="Pfam" id="PF12826">
    <property type="entry name" value="HHH_2"/>
    <property type="match status" value="1"/>
</dbReference>
<dbReference type="Pfam" id="PF22745">
    <property type="entry name" value="Nlig-Ia"/>
    <property type="match status" value="1"/>
</dbReference>
<dbReference type="PIRSF" id="PIRSF001604">
    <property type="entry name" value="LigA"/>
    <property type="match status" value="1"/>
</dbReference>
<dbReference type="SMART" id="SM00292">
    <property type="entry name" value="BRCT"/>
    <property type="match status" value="1"/>
</dbReference>
<dbReference type="SMART" id="SM00278">
    <property type="entry name" value="HhH1"/>
    <property type="match status" value="4"/>
</dbReference>
<dbReference type="SMART" id="SM00532">
    <property type="entry name" value="LIGANc"/>
    <property type="match status" value="1"/>
</dbReference>
<dbReference type="SUPFAM" id="SSF52113">
    <property type="entry name" value="BRCT domain"/>
    <property type="match status" value="1"/>
</dbReference>
<dbReference type="SUPFAM" id="SSF56091">
    <property type="entry name" value="DNA ligase/mRNA capping enzyme, catalytic domain"/>
    <property type="match status" value="1"/>
</dbReference>
<dbReference type="SUPFAM" id="SSF50249">
    <property type="entry name" value="Nucleic acid-binding proteins"/>
    <property type="match status" value="1"/>
</dbReference>
<dbReference type="SUPFAM" id="SSF47781">
    <property type="entry name" value="RuvA domain 2-like"/>
    <property type="match status" value="1"/>
</dbReference>
<dbReference type="PROSITE" id="PS50172">
    <property type="entry name" value="BRCT"/>
    <property type="match status" value="1"/>
</dbReference>
<dbReference type="PROSITE" id="PS01056">
    <property type="entry name" value="DNA_LIGASE_N2"/>
    <property type="match status" value="1"/>
</dbReference>
<gene>
    <name evidence="1" type="primary">ligA1</name>
    <name type="ordered locus">Dvul_1045</name>
</gene>
<accession>A1VC99</accession>
<proteinExistence type="inferred from homology"/>